<dbReference type="EMBL" id="BC088496">
    <property type="protein sequence ID" value="AAH88496.1"/>
    <property type="molecule type" value="mRNA"/>
</dbReference>
<dbReference type="RefSeq" id="NP_001011344.1">
    <property type="nucleotide sequence ID" value="NM_001011344.1"/>
</dbReference>
<dbReference type="RefSeq" id="XP_012814396.1">
    <property type="nucleotide sequence ID" value="XM_012958942.2"/>
</dbReference>
<dbReference type="FunCoup" id="Q5M7R3">
    <property type="interactions" value="996"/>
</dbReference>
<dbReference type="STRING" id="8364.ENSXETP00000054793"/>
<dbReference type="GlyCosmos" id="Q5M7R3">
    <property type="glycosylation" value="3 sites, No reported glycans"/>
</dbReference>
<dbReference type="DNASU" id="496808"/>
<dbReference type="GeneID" id="496808"/>
<dbReference type="KEGG" id="xtr:496808"/>
<dbReference type="CTD" id="84928"/>
<dbReference type="InParanoid" id="Q5M7R3"/>
<dbReference type="OrthoDB" id="509821at2759"/>
<dbReference type="Proteomes" id="UP000008143">
    <property type="component" value="Chromosome 3"/>
</dbReference>
<dbReference type="GO" id="GO:0005794">
    <property type="term" value="C:Golgi apparatus"/>
    <property type="evidence" value="ECO:0007669"/>
    <property type="project" value="UniProtKB-SubCell"/>
</dbReference>
<dbReference type="GO" id="GO:0016020">
    <property type="term" value="C:membrane"/>
    <property type="evidence" value="ECO:0007669"/>
    <property type="project" value="UniProtKB-SubCell"/>
</dbReference>
<dbReference type="GO" id="GO:0005635">
    <property type="term" value="C:nuclear envelope"/>
    <property type="evidence" value="ECO:0007669"/>
    <property type="project" value="UniProtKB-SubCell"/>
</dbReference>
<dbReference type="InterPro" id="IPR019176">
    <property type="entry name" value="Cytochrome_B561-rel"/>
</dbReference>
<dbReference type="PANTHER" id="PTHR21780">
    <property type="entry name" value="TRANSMEMBRANE PROTEIN 209"/>
    <property type="match status" value="1"/>
</dbReference>
<dbReference type="PANTHER" id="PTHR21780:SF0">
    <property type="entry name" value="TRANSMEMBRANE PROTEIN 209"/>
    <property type="match status" value="1"/>
</dbReference>
<dbReference type="Pfam" id="PF09786">
    <property type="entry name" value="CytochromB561_N"/>
    <property type="match status" value="1"/>
</dbReference>
<evidence type="ECO:0000250" key="1">
    <source>
        <dbReference type="UniProtKB" id="Q96SK2"/>
    </source>
</evidence>
<evidence type="ECO:0000255" key="2"/>
<evidence type="ECO:0000256" key="3">
    <source>
        <dbReference type="SAM" id="MobiDB-lite"/>
    </source>
</evidence>
<evidence type="ECO:0000305" key="4"/>
<gene>
    <name type="primary">tmem209</name>
</gene>
<protein>
    <recommendedName>
        <fullName>Transmembrane protein 209</fullName>
    </recommendedName>
</protein>
<keyword id="KW-0963">Cytoplasm</keyword>
<keyword id="KW-0325">Glycoprotein</keyword>
<keyword id="KW-0333">Golgi apparatus</keyword>
<keyword id="KW-0472">Membrane</keyword>
<keyword id="KW-0539">Nucleus</keyword>
<keyword id="KW-1185">Reference proteome</keyword>
<keyword id="KW-0812">Transmembrane</keyword>
<keyword id="KW-1133">Transmembrane helix</keyword>
<sequence>MKEEEQRTAMSFIDTTIKMRKEANAKKVVLAWGLLNVSLAGMIYTEMTGKMISTYYNITYWPLWYIELALASLFSLNALFDFWRYFKYTMTSPNITLSPSQQKLLGVPYSSAQSSPPRDLITNKVPASTPSPSMQGQNVLSYSPSRSPSSSPKFSPSCISGYSPQIQAMLPSSGSPFTSVVSYSSNSFPKITSYSSSPGSSQYPSNLGPVEGGLRSRYRSSPSTYSSPTDKEDYMTDLKLLDTFLRSEEEKQHRVQLGSPDSSSTAASPTFWNYSRSVGDYAHTLRKFQYQLACRSQAPSAHKDEADLGSKHAAEEVWGKVTMNRQLLDHMDAWTAKFRNWVNETILVPLVHEVDSVNTQMRRLGCPELQIGESSISSLKQAALVKAPLIPTLHIIVQYLDITPNQEYLYERLKELSHGGCMSSFRWNSGGDFKGRKWDTDLPTDSAIVMHIFCTYLDSRLPPHPKYPDGKTFTSQHFVQTPDKPDTSNENVFCIHQSNVNPPYYELVYQKHITBRNNLFHTLLMFLYIIKTKESGMLGRVNLGLSGVNILWIFGDH</sequence>
<accession>Q5M7R3</accession>
<reference key="1">
    <citation type="submission" date="2004-12" db="EMBL/GenBank/DDBJ databases">
        <authorList>
            <consortium name="NIH - Xenopus Gene Collection (XGC) project"/>
        </authorList>
    </citation>
    <scope>NUCLEOTIDE SEQUENCE [LARGE SCALE MRNA]</scope>
    <source>
        <tissue>Embryo</tissue>
    </source>
</reference>
<feature type="chain" id="PRO_0000331636" description="Transmembrane protein 209">
    <location>
        <begin position="1"/>
        <end position="557"/>
    </location>
</feature>
<feature type="transmembrane region" description="Helical" evidence="2">
    <location>
        <begin position="28"/>
        <end position="48"/>
    </location>
</feature>
<feature type="transmembrane region" description="Helical" evidence="2">
    <location>
        <begin position="60"/>
        <end position="80"/>
    </location>
</feature>
<feature type="region of interest" description="Disordered" evidence="3">
    <location>
        <begin position="108"/>
        <end position="156"/>
    </location>
</feature>
<feature type="region of interest" description="Disordered" evidence="3">
    <location>
        <begin position="194"/>
        <end position="232"/>
    </location>
</feature>
<feature type="compositionally biased region" description="Polar residues" evidence="3">
    <location>
        <begin position="125"/>
        <end position="140"/>
    </location>
</feature>
<feature type="compositionally biased region" description="Low complexity" evidence="3">
    <location>
        <begin position="141"/>
        <end position="156"/>
    </location>
</feature>
<feature type="compositionally biased region" description="Low complexity" evidence="3">
    <location>
        <begin position="194"/>
        <end position="205"/>
    </location>
</feature>
<feature type="compositionally biased region" description="Low complexity" evidence="3">
    <location>
        <begin position="219"/>
        <end position="228"/>
    </location>
</feature>
<feature type="glycosylation site" description="N-linked (GlcNAc...) asparagine" evidence="2">
    <location>
        <position position="57"/>
    </location>
</feature>
<feature type="glycosylation site" description="N-linked (GlcNAc...) asparagine" evidence="2">
    <location>
        <position position="273"/>
    </location>
</feature>
<feature type="glycosylation site" description="N-linked (GlcNAc...) asparagine" evidence="2">
    <location>
        <position position="343"/>
    </location>
</feature>
<comment type="subcellular location">
    <subcellularLocation>
        <location evidence="4">Membrane</location>
        <topology evidence="2">Multi-pass membrane protein</topology>
    </subcellularLocation>
    <subcellularLocation>
        <location evidence="1">Nucleus envelope</location>
    </subcellularLocation>
    <subcellularLocation>
        <location evidence="1">Golgi apparatus</location>
    </subcellularLocation>
    <subcellularLocation>
        <location evidence="1">Cytoplasm</location>
    </subcellularLocation>
    <text evidence="1">Weakly expressed in the cytoplasm.</text>
</comment>
<name>TM209_XENTR</name>
<organism>
    <name type="scientific">Xenopus tropicalis</name>
    <name type="common">Western clawed frog</name>
    <name type="synonym">Silurana tropicalis</name>
    <dbReference type="NCBI Taxonomy" id="8364"/>
    <lineage>
        <taxon>Eukaryota</taxon>
        <taxon>Metazoa</taxon>
        <taxon>Chordata</taxon>
        <taxon>Craniata</taxon>
        <taxon>Vertebrata</taxon>
        <taxon>Euteleostomi</taxon>
        <taxon>Amphibia</taxon>
        <taxon>Batrachia</taxon>
        <taxon>Anura</taxon>
        <taxon>Pipoidea</taxon>
        <taxon>Pipidae</taxon>
        <taxon>Xenopodinae</taxon>
        <taxon>Xenopus</taxon>
        <taxon>Silurana</taxon>
    </lineage>
</organism>
<proteinExistence type="evidence at transcript level"/>